<comment type="similarity">
    <text evidence="3">Belongs to the SH3YL1 family.</text>
</comment>
<sequence length="335" mass="36357">MNNPIPSNLKSESRKAAKILKEFTTISSRNGPDKIIPPHVIAKAQGLAVLSVIKAGFLVTARGGSGIVLARLPGGRWSAPSAIGIAGLGGGFEIGIEVSDLVIILNHERAVRAFAKGGNLTLGGNFTVAVGPLGRNLEGDVAIRSSAAVYTYCKSRGLFAGISLEGSGLIERKETNRKFYGQDDIRAYEILFGEIFRPTEAKELYEILDSFTEKYEIEEQSVNMRKMAREQRKEAKSSRPRSFPSSSGNDGQLTRPVHKVYPDLPSHSVPDRSSRGDCVVATALYPFEGQHSGDLPFQAGDKITVLTKTNSQYDWWEGKLKGNIGIFPANYVSVN</sequence>
<accession>Q6DFH5</accession>
<organism>
    <name type="scientific">Xenopus laevis</name>
    <name type="common">African clawed frog</name>
    <dbReference type="NCBI Taxonomy" id="8355"/>
    <lineage>
        <taxon>Eukaryota</taxon>
        <taxon>Metazoa</taxon>
        <taxon>Chordata</taxon>
        <taxon>Craniata</taxon>
        <taxon>Vertebrata</taxon>
        <taxon>Euteleostomi</taxon>
        <taxon>Amphibia</taxon>
        <taxon>Batrachia</taxon>
        <taxon>Anura</taxon>
        <taxon>Pipoidea</taxon>
        <taxon>Pipidae</taxon>
        <taxon>Xenopodinae</taxon>
        <taxon>Xenopus</taxon>
        <taxon>Xenopus</taxon>
    </lineage>
</organism>
<reference key="1">
    <citation type="submission" date="2004-07" db="EMBL/GenBank/DDBJ databases">
        <authorList>
            <consortium name="NIH - Xenopus Gene Collection (XGC) project"/>
        </authorList>
    </citation>
    <scope>NUCLEOTIDE SEQUENCE [LARGE SCALE MRNA]</scope>
    <source>
        <tissue>Ovary</tissue>
    </source>
</reference>
<proteinExistence type="evidence at transcript level"/>
<feature type="chain" id="PRO_0000341564" description="SH3 domain-containing YSC84-like protein 1">
    <location>
        <begin position="1"/>
        <end position="335"/>
    </location>
</feature>
<feature type="domain" description="SH3" evidence="1">
    <location>
        <begin position="276"/>
        <end position="335"/>
    </location>
</feature>
<feature type="region of interest" description="Disordered" evidence="2">
    <location>
        <begin position="225"/>
        <end position="274"/>
    </location>
</feature>
<feature type="compositionally biased region" description="Basic and acidic residues" evidence="2">
    <location>
        <begin position="227"/>
        <end position="237"/>
    </location>
</feature>
<keyword id="KW-1185">Reference proteome</keyword>
<keyword id="KW-0728">SH3 domain</keyword>
<gene>
    <name type="primary">sh3yl1</name>
</gene>
<dbReference type="EMBL" id="BC076762">
    <property type="protein sequence ID" value="AAH76762.1"/>
    <property type="molecule type" value="mRNA"/>
</dbReference>
<dbReference type="RefSeq" id="NP_001086532.1">
    <property type="nucleotide sequence ID" value="NM_001093063.1"/>
</dbReference>
<dbReference type="SMR" id="Q6DFH5"/>
<dbReference type="DNASU" id="446367"/>
<dbReference type="GeneID" id="446367"/>
<dbReference type="KEGG" id="xla:446367"/>
<dbReference type="AGR" id="Xenbase:XB-GENE-953859"/>
<dbReference type="CTD" id="446367"/>
<dbReference type="Xenbase" id="XB-GENE-953859">
    <property type="gene designation" value="sh3yl1.L"/>
</dbReference>
<dbReference type="OMA" id="SNCKARN"/>
<dbReference type="OrthoDB" id="443981at2759"/>
<dbReference type="Proteomes" id="UP000186698">
    <property type="component" value="Chromosome 5L"/>
</dbReference>
<dbReference type="Bgee" id="446367">
    <property type="expression patterns" value="Expressed in stomach and 19 other cell types or tissues"/>
</dbReference>
<dbReference type="GO" id="GO:0032587">
    <property type="term" value="C:ruffle membrane"/>
    <property type="evidence" value="ECO:0000318"/>
    <property type="project" value="GO_Central"/>
</dbReference>
<dbReference type="GO" id="GO:0035091">
    <property type="term" value="F:phosphatidylinositol binding"/>
    <property type="evidence" value="ECO:0000318"/>
    <property type="project" value="GO_Central"/>
</dbReference>
<dbReference type="GO" id="GO:1900027">
    <property type="term" value="P:regulation of ruffle assembly"/>
    <property type="evidence" value="ECO:0000318"/>
    <property type="project" value="GO_Central"/>
</dbReference>
<dbReference type="CDD" id="cd11841">
    <property type="entry name" value="SH3_SH3YL1_like"/>
    <property type="match status" value="1"/>
</dbReference>
<dbReference type="CDD" id="cd11525">
    <property type="entry name" value="SYLF_SH3YL1_like"/>
    <property type="match status" value="1"/>
</dbReference>
<dbReference type="FunFam" id="2.30.30.40:FF:000100">
    <property type="entry name" value="SH3 domain-containing YSC84-like protein 1"/>
    <property type="match status" value="1"/>
</dbReference>
<dbReference type="Gene3D" id="2.30.30.40">
    <property type="entry name" value="SH3 Domains"/>
    <property type="match status" value="1"/>
</dbReference>
<dbReference type="InterPro" id="IPR036028">
    <property type="entry name" value="SH3-like_dom_sf"/>
</dbReference>
<dbReference type="InterPro" id="IPR001452">
    <property type="entry name" value="SH3_domain"/>
</dbReference>
<dbReference type="InterPro" id="IPR051702">
    <property type="entry name" value="SH3_domain_YSC84-like"/>
</dbReference>
<dbReference type="InterPro" id="IPR035511">
    <property type="entry name" value="SH3YL1_SH3"/>
</dbReference>
<dbReference type="InterPro" id="IPR033643">
    <property type="entry name" value="SYLF_SH3YL1-like"/>
</dbReference>
<dbReference type="InterPro" id="IPR007461">
    <property type="entry name" value="Ysc84_actin-binding"/>
</dbReference>
<dbReference type="PANTHER" id="PTHR15629:SF2">
    <property type="entry name" value="SH3 DOMAIN-CONTAINING YSC84-LIKE PROTEIN 1"/>
    <property type="match status" value="1"/>
</dbReference>
<dbReference type="PANTHER" id="PTHR15629">
    <property type="entry name" value="SH3YL1 PROTEIN"/>
    <property type="match status" value="1"/>
</dbReference>
<dbReference type="Pfam" id="PF00018">
    <property type="entry name" value="SH3_1"/>
    <property type="match status" value="1"/>
</dbReference>
<dbReference type="Pfam" id="PF04366">
    <property type="entry name" value="Ysc84"/>
    <property type="match status" value="1"/>
</dbReference>
<dbReference type="PRINTS" id="PR00452">
    <property type="entry name" value="SH3DOMAIN"/>
</dbReference>
<dbReference type="SMART" id="SM00326">
    <property type="entry name" value="SH3"/>
    <property type="match status" value="1"/>
</dbReference>
<dbReference type="SUPFAM" id="SSF50044">
    <property type="entry name" value="SH3-domain"/>
    <property type="match status" value="1"/>
</dbReference>
<dbReference type="PROSITE" id="PS50002">
    <property type="entry name" value="SH3"/>
    <property type="match status" value="1"/>
</dbReference>
<protein>
    <recommendedName>
        <fullName>SH3 domain-containing YSC84-like protein 1</fullName>
    </recommendedName>
</protein>
<evidence type="ECO:0000255" key="1">
    <source>
        <dbReference type="PROSITE-ProRule" id="PRU00192"/>
    </source>
</evidence>
<evidence type="ECO:0000256" key="2">
    <source>
        <dbReference type="SAM" id="MobiDB-lite"/>
    </source>
</evidence>
<evidence type="ECO:0000305" key="3"/>
<name>SH3Y1_XENLA</name>